<sequence length="35" mass="4159">MRMICIRCDKPLKSRVPSRQCQCKDPIKAEEHTEK</sequence>
<proteinExistence type="predicted"/>
<accession>P20325</accession>
<organismHost>
    <name type="scientific">Escherichia coli</name>
    <dbReference type="NCBI Taxonomy" id="562"/>
</organismHost>
<organism>
    <name type="scientific">Enterobacteria phage T3</name>
    <name type="common">Bacteriophage T3</name>
    <dbReference type="NCBI Taxonomy" id="10759"/>
    <lineage>
        <taxon>Viruses</taxon>
        <taxon>Duplodnaviria</taxon>
        <taxon>Heunggongvirae</taxon>
        <taxon>Uroviricota</taxon>
        <taxon>Caudoviricetes</taxon>
        <taxon>Autographiviridae</taxon>
        <taxon>Studiervirinae</taxon>
        <taxon>Teetrevirus</taxon>
        <taxon>Teetrevirus T3</taxon>
    </lineage>
</organism>
<protein>
    <recommendedName>
        <fullName>Uncharacterized gene 3.7 protein</fullName>
    </recommendedName>
</protein>
<gene>
    <name type="primary">3.7</name>
</gene>
<dbReference type="EMBL" id="X17255">
    <property type="protein sequence ID" value="CAA35134.1"/>
    <property type="molecule type" value="Genomic_DNA"/>
</dbReference>
<dbReference type="PIR" id="S07507">
    <property type="entry name" value="S07507"/>
</dbReference>
<dbReference type="RefSeq" id="NP_523314.1">
    <property type="nucleotide sequence ID" value="NC_003298.1"/>
</dbReference>
<dbReference type="KEGG" id="vg:927410"/>
<dbReference type="OrthoDB" id="28016at10239"/>
<name>Y37_BPT3</name>
<reference key="1">
    <citation type="journal article" date="1989" name="J. Mol. Biol.">
        <title>Sequence of bacteriophage T3 DNA from gene 2.5 through gene 9.</title>
        <authorList>
            <person name="Beck P.J."/>
            <person name="Gonzalez S."/>
            <person name="Ward C.L."/>
            <person name="Molineux I.J."/>
        </authorList>
    </citation>
    <scope>NUCLEOTIDE SEQUENCE [GENOMIC DNA]</scope>
    <source>
        <strain>Luria</strain>
    </source>
</reference>
<feature type="chain" id="PRO_0000106487" description="Uncharacterized gene 3.7 protein">
    <location>
        <begin position="1"/>
        <end position="35"/>
    </location>
</feature>